<reference key="1">
    <citation type="journal article" date="2013" name="Nature">
        <title>The zebrafish reference genome sequence and its relationship to the human genome.</title>
        <authorList>
            <person name="Howe K."/>
            <person name="Clark M.D."/>
            <person name="Torroja C.F."/>
            <person name="Torrance J."/>
            <person name="Berthelot C."/>
            <person name="Muffato M."/>
            <person name="Collins J.E."/>
            <person name="Humphray S."/>
            <person name="McLaren K."/>
            <person name="Matthews L."/>
            <person name="McLaren S."/>
            <person name="Sealy I."/>
            <person name="Caccamo M."/>
            <person name="Churcher C."/>
            <person name="Scott C."/>
            <person name="Barrett J.C."/>
            <person name="Koch R."/>
            <person name="Rauch G.J."/>
            <person name="White S."/>
            <person name="Chow W."/>
            <person name="Kilian B."/>
            <person name="Quintais L.T."/>
            <person name="Guerra-Assuncao J.A."/>
            <person name="Zhou Y."/>
            <person name="Gu Y."/>
            <person name="Yen J."/>
            <person name="Vogel J.H."/>
            <person name="Eyre T."/>
            <person name="Redmond S."/>
            <person name="Banerjee R."/>
            <person name="Chi J."/>
            <person name="Fu B."/>
            <person name="Langley E."/>
            <person name="Maguire S.F."/>
            <person name="Laird G.K."/>
            <person name="Lloyd D."/>
            <person name="Kenyon E."/>
            <person name="Donaldson S."/>
            <person name="Sehra H."/>
            <person name="Almeida-King J."/>
            <person name="Loveland J."/>
            <person name="Trevanion S."/>
            <person name="Jones M."/>
            <person name="Quail M."/>
            <person name="Willey D."/>
            <person name="Hunt A."/>
            <person name="Burton J."/>
            <person name="Sims S."/>
            <person name="McLay K."/>
            <person name="Plumb B."/>
            <person name="Davis J."/>
            <person name="Clee C."/>
            <person name="Oliver K."/>
            <person name="Clark R."/>
            <person name="Riddle C."/>
            <person name="Elliot D."/>
            <person name="Threadgold G."/>
            <person name="Harden G."/>
            <person name="Ware D."/>
            <person name="Begum S."/>
            <person name="Mortimore B."/>
            <person name="Kerry G."/>
            <person name="Heath P."/>
            <person name="Phillimore B."/>
            <person name="Tracey A."/>
            <person name="Corby N."/>
            <person name="Dunn M."/>
            <person name="Johnson C."/>
            <person name="Wood J."/>
            <person name="Clark S."/>
            <person name="Pelan S."/>
            <person name="Griffiths G."/>
            <person name="Smith M."/>
            <person name="Glithero R."/>
            <person name="Howden P."/>
            <person name="Barker N."/>
            <person name="Lloyd C."/>
            <person name="Stevens C."/>
            <person name="Harley J."/>
            <person name="Holt K."/>
            <person name="Panagiotidis G."/>
            <person name="Lovell J."/>
            <person name="Beasley H."/>
            <person name="Henderson C."/>
            <person name="Gordon D."/>
            <person name="Auger K."/>
            <person name="Wright D."/>
            <person name="Collins J."/>
            <person name="Raisen C."/>
            <person name="Dyer L."/>
            <person name="Leung K."/>
            <person name="Robertson L."/>
            <person name="Ambridge K."/>
            <person name="Leongamornlert D."/>
            <person name="McGuire S."/>
            <person name="Gilderthorp R."/>
            <person name="Griffiths C."/>
            <person name="Manthravadi D."/>
            <person name="Nichol S."/>
            <person name="Barker G."/>
            <person name="Whitehead S."/>
            <person name="Kay M."/>
            <person name="Brown J."/>
            <person name="Murnane C."/>
            <person name="Gray E."/>
            <person name="Humphries M."/>
            <person name="Sycamore N."/>
            <person name="Barker D."/>
            <person name="Saunders D."/>
            <person name="Wallis J."/>
            <person name="Babbage A."/>
            <person name="Hammond S."/>
            <person name="Mashreghi-Mohammadi M."/>
            <person name="Barr L."/>
            <person name="Martin S."/>
            <person name="Wray P."/>
            <person name="Ellington A."/>
            <person name="Matthews N."/>
            <person name="Ellwood M."/>
            <person name="Woodmansey R."/>
            <person name="Clark G."/>
            <person name="Cooper J."/>
            <person name="Tromans A."/>
            <person name="Grafham D."/>
            <person name="Skuce C."/>
            <person name="Pandian R."/>
            <person name="Andrews R."/>
            <person name="Harrison E."/>
            <person name="Kimberley A."/>
            <person name="Garnett J."/>
            <person name="Fosker N."/>
            <person name="Hall R."/>
            <person name="Garner P."/>
            <person name="Kelly D."/>
            <person name="Bird C."/>
            <person name="Palmer S."/>
            <person name="Gehring I."/>
            <person name="Berger A."/>
            <person name="Dooley C.M."/>
            <person name="Ersan-Urun Z."/>
            <person name="Eser C."/>
            <person name="Geiger H."/>
            <person name="Geisler M."/>
            <person name="Karotki L."/>
            <person name="Kirn A."/>
            <person name="Konantz J."/>
            <person name="Konantz M."/>
            <person name="Oberlander M."/>
            <person name="Rudolph-Geiger S."/>
            <person name="Teucke M."/>
            <person name="Lanz C."/>
            <person name="Raddatz G."/>
            <person name="Osoegawa K."/>
            <person name="Zhu B."/>
            <person name="Rapp A."/>
            <person name="Widaa S."/>
            <person name="Langford C."/>
            <person name="Yang F."/>
            <person name="Schuster S.C."/>
            <person name="Carter N.P."/>
            <person name="Harrow J."/>
            <person name="Ning Z."/>
            <person name="Herrero J."/>
            <person name="Searle S.M."/>
            <person name="Enright A."/>
            <person name="Geisler R."/>
            <person name="Plasterk R.H."/>
            <person name="Lee C."/>
            <person name="Westerfield M."/>
            <person name="de Jong P.J."/>
            <person name="Zon L.I."/>
            <person name="Postlethwait J.H."/>
            <person name="Nusslein-Volhard C."/>
            <person name="Hubbard T.J."/>
            <person name="Roest Crollius H."/>
            <person name="Rogers J."/>
            <person name="Stemple D.L."/>
        </authorList>
    </citation>
    <scope>NUCLEOTIDE SEQUENCE [LARGE SCALE GENOMIC DNA]</scope>
    <source>
        <strain>Tuebingen</strain>
    </source>
</reference>
<reference key="2">
    <citation type="journal article" date="2019" name="Hum. Mol. Genet.">
        <title>CPSF1 mutations are associated with early-onset high myopia and involved in retinal ganglion cell axon projection.</title>
        <authorList>
            <person name="Ouyang J."/>
            <person name="Sun W."/>
            <person name="Xiao X."/>
            <person name="Li S."/>
            <person name="Jia X."/>
            <person name="Zhou L."/>
            <person name="Wang P."/>
            <person name="Zhang Q."/>
        </authorList>
    </citation>
    <scope>FUNCTION</scope>
    <scope>DISRUPTION PHENOTYPE</scope>
</reference>
<proteinExistence type="inferred from homology"/>
<keyword id="KW-0539">Nucleus</keyword>
<keyword id="KW-1185">Reference proteome</keyword>
<organism>
    <name type="scientific">Danio rerio</name>
    <name type="common">Zebrafish</name>
    <name type="synonym">Brachydanio rerio</name>
    <dbReference type="NCBI Taxonomy" id="7955"/>
    <lineage>
        <taxon>Eukaryota</taxon>
        <taxon>Metazoa</taxon>
        <taxon>Chordata</taxon>
        <taxon>Craniata</taxon>
        <taxon>Vertebrata</taxon>
        <taxon>Euteleostomi</taxon>
        <taxon>Actinopterygii</taxon>
        <taxon>Neopterygii</taxon>
        <taxon>Teleostei</taxon>
        <taxon>Ostariophysi</taxon>
        <taxon>Cypriniformes</taxon>
        <taxon>Danionidae</taxon>
        <taxon>Danioninae</taxon>
        <taxon>Danio</taxon>
    </lineage>
</organism>
<sequence>MYAVYRQAHPPTAVEFAVYCNFISSQEKNLVVAGTSQLYVYRIIYDVESTSKSEKSSDGKSRKEKLEQVASFSLFGNVMSMASVQLVGTNRDALLLSFKDAKLSVVEYDPGTHDLKTLSLHYFEEPELRDGFVQNVHIPMVRVDPENRCAVMLVYGTCLVVLPFRKDTLADEQEGIVGEGQKSSFLPSYIIDVRELDEKLLNIIDMKFLHGYYEPTLLILFEPNQTWPGRVAVRQDTCSIVAISLNIMQKVHPVIWSLSNLPFDCNQVMAVPKPIGGVVVFAVNSLLYLNQSVPPFGVSLNSLTNGTTAFPLRPQEEVKITLDCSQASFITSDKMVISLKGGEIYVLTLITDGMRSVRAFHFDKAAASVLTTCMMTMEPGYLFLGSRLGNSLLLRYTEKLQETPMEEGKENEEKEKQEEPPNKKKRVDSNWAGCPGKGNLPDELDEIEVYGSEAQSGTQLATYSFEVCDSILNIGPCASASMGEPAFLSEEFQTNPEPDLEVVVCSGYGKNGALSVLQKSIRPQVVTTFELPGCHDMWTVIYCEEKPEKPSAEGDGESPEEEKREPTIEDDKKKHGFLILSREDSTMILQTGQEIMELDTSGFATQGPTVYAGNIGDNKYIIQVSPMGIRLLEGVNQLHFIPVDLGSPIVHCSVADPYVVIMTAEGVVTMFVLKNDSYMGKSHRLALQKPQIHTQSRVITLCAYRDVSGMFTTENKVSFLAKEEIAIRTNSETETIIQDISNTVDDEEEMLYGESNPLTSPNKEESSRGSAAASSAHTGKESGSGRQEPSHWCLLVRENGVMEIYQLPDWRLVFLVKNFPVGQRVLVDSSASQSATQGELKKEEVTRQGDIPLVKEVALVSLGYNHSRPYLLAHVEQELLIYEAFPYDQQQAQSNLKVRFKKMPHNINYREKKVKVRKDKKPEGQGEDTLGVKGRVARFRYFQDISGYSGVFICGPSPHWMLVTSRGAMRLHPMTIDGAIESFSPFHNINCPKGFLYFNKQGELRISVLPTYLSYDAPWPVRKIPLRCTVHYVSYHVESKVYAVCTSVKEPCTRIPRMTGEEKEFETIERDERYIHPQQDKFSIQLISPVSWEAIPNTRVDLEEWEHVTCMKTVALKSQETVSGLKGYVALGTCLMQGEEVTCRGRILILDVIEVVPEPGQPLTKNKFKVLYEKEQKGPVTALCHCSGFLVSAIGQKIFLWSLKDNDLTGMAFIDTQLYIHQMYSIKNFILAADVMKSISLLRYQPESKTLSLVSRDAKPLEVYSIEFMVDNNQLGFLVSDRDKNLMVYMYLPEAKESFGGMRLLRRADFNVGSHVNAFWRMPCRGTLDTANKKALTWDNKHITWFATLDGGVGLLLPMQEKTYRRLLMLQNALTTMLPHHAGLNPKAFRMLHCDRRTLQNAVKNILDGELLNKYLYLSTMERSELAKKIGTTPDIILDDLLEIERVTAHF</sequence>
<evidence type="ECO:0000250" key="1">
    <source>
        <dbReference type="UniProtKB" id="Q10570"/>
    </source>
</evidence>
<evidence type="ECO:0000255" key="2"/>
<evidence type="ECO:0000256" key="3">
    <source>
        <dbReference type="SAM" id="MobiDB-lite"/>
    </source>
</evidence>
<evidence type="ECO:0000269" key="4">
    <source>
    </source>
</evidence>
<evidence type="ECO:0000305" key="5"/>
<accession>A0A0R4IC37</accession>
<dbReference type="EMBL" id="CU467825">
    <property type="status" value="NOT_ANNOTATED_CDS"/>
    <property type="molecule type" value="Genomic_DNA"/>
</dbReference>
<dbReference type="EMBL" id="FP236813">
    <property type="status" value="NOT_ANNOTATED_CDS"/>
    <property type="molecule type" value="Genomic_DNA"/>
</dbReference>
<dbReference type="EMBL" id="FP325126">
    <property type="status" value="NOT_ANNOTATED_CDS"/>
    <property type="molecule type" value="Genomic_DNA"/>
</dbReference>
<dbReference type="EMBL" id="LO018649">
    <property type="status" value="NOT_ANNOTATED_CDS"/>
    <property type="molecule type" value="Genomic_DNA"/>
</dbReference>
<dbReference type="SMR" id="A0A0R4IC37"/>
<dbReference type="FunCoup" id="A0A0R4IC37">
    <property type="interactions" value="2890"/>
</dbReference>
<dbReference type="STRING" id="7955.ENSDARP00000130523"/>
<dbReference type="PaxDb" id="7955-ENSDARP00000098742"/>
<dbReference type="Ensembl" id="ENSDART00000163478">
    <property type="protein sequence ID" value="ENSDARP00000130523"/>
    <property type="gene ID" value="ENSDARG00000034178"/>
</dbReference>
<dbReference type="InParanoid" id="A0A0R4IC37"/>
<dbReference type="OMA" id="PMTKFKL"/>
<dbReference type="PRO" id="PR:A0A0R4IC37"/>
<dbReference type="Proteomes" id="UP000000437">
    <property type="component" value="Unplaced"/>
</dbReference>
<dbReference type="Bgee" id="ENSDARG00000034178">
    <property type="expression patterns" value="Expressed in presomitic mesoderm and 29 other cell types or tissues"/>
</dbReference>
<dbReference type="ExpressionAtlas" id="A0A0R4IC37">
    <property type="expression patterns" value="baseline"/>
</dbReference>
<dbReference type="GO" id="GO:0005654">
    <property type="term" value="C:nucleoplasm"/>
    <property type="evidence" value="ECO:0007669"/>
    <property type="project" value="UniProtKB-SubCell"/>
</dbReference>
<dbReference type="GO" id="GO:0003676">
    <property type="term" value="F:nucleic acid binding"/>
    <property type="evidence" value="ECO:0007669"/>
    <property type="project" value="InterPro"/>
</dbReference>
<dbReference type="FunFam" id="1.10.150.910:FF:000005">
    <property type="entry name" value="Cleavage and polyadenylation specific factor 1"/>
    <property type="match status" value="1"/>
</dbReference>
<dbReference type="FunFam" id="2.130.10.10:FF:002223">
    <property type="entry name" value="Cleavage and polyadenylation specific factor 1"/>
    <property type="match status" value="1"/>
</dbReference>
<dbReference type="FunFam" id="2.130.10.10:FF:000100">
    <property type="entry name" value="Cleavage and polyadenylation specificity factor subunit 1"/>
    <property type="match status" value="1"/>
</dbReference>
<dbReference type="FunFam" id="2.130.10.10:FF:000118">
    <property type="entry name" value="Cleavage and polyadenylation specificity factor subunit 1"/>
    <property type="match status" value="1"/>
</dbReference>
<dbReference type="FunFam" id="2.130.10.10:FF:000544">
    <property type="entry name" value="cleavage and polyadenylation specificity factor subunit 1"/>
    <property type="match status" value="1"/>
</dbReference>
<dbReference type="Gene3D" id="1.10.150.910">
    <property type="match status" value="1"/>
</dbReference>
<dbReference type="Gene3D" id="2.130.10.10">
    <property type="entry name" value="YVTN repeat-like/Quinoprotein amine dehydrogenase"/>
    <property type="match status" value="2"/>
</dbReference>
<dbReference type="InterPro" id="IPR018846">
    <property type="entry name" value="Beta-prop_RSE1/DDB1/CPSF1_1st"/>
</dbReference>
<dbReference type="InterPro" id="IPR004871">
    <property type="entry name" value="Cleavage/polyA-sp_fac_asu_C"/>
</dbReference>
<dbReference type="InterPro" id="IPR050358">
    <property type="entry name" value="RSE1/DDB1/CFT1/CPSF1"/>
</dbReference>
<dbReference type="InterPro" id="IPR015943">
    <property type="entry name" value="WD40/YVTN_repeat-like_dom_sf"/>
</dbReference>
<dbReference type="PANTHER" id="PTHR10644">
    <property type="entry name" value="DNA REPAIR/RNA PROCESSING CPSF FAMILY"/>
    <property type="match status" value="1"/>
</dbReference>
<dbReference type="Pfam" id="PF10433">
    <property type="entry name" value="Beta-prop_RSE1_1st"/>
    <property type="match status" value="1"/>
</dbReference>
<dbReference type="Pfam" id="PF23726">
    <property type="entry name" value="Beta-prop_RSE1_2nd"/>
    <property type="match status" value="1"/>
</dbReference>
<dbReference type="Pfam" id="PF03178">
    <property type="entry name" value="CPSF_A"/>
    <property type="match status" value="1"/>
</dbReference>
<name>CPSF1_DANRE</name>
<feature type="chain" id="PRO_0000451718" description="Cleavage and polyadenylation specificity factor subunit 1">
    <location>
        <begin position="1"/>
        <end position="1451"/>
    </location>
</feature>
<feature type="region of interest" description="Disordered" evidence="3">
    <location>
        <begin position="401"/>
        <end position="432"/>
    </location>
</feature>
<feature type="region of interest" description="Disordered" evidence="3">
    <location>
        <begin position="548"/>
        <end position="572"/>
    </location>
</feature>
<feature type="region of interest" description="Disordered" evidence="3">
    <location>
        <begin position="753"/>
        <end position="789"/>
    </location>
</feature>
<feature type="short sequence motif" description="Nuclear localization signal" evidence="2">
    <location>
        <begin position="901"/>
        <end position="916"/>
    </location>
</feature>
<feature type="compositionally biased region" description="Basic and acidic residues" evidence="3">
    <location>
        <begin position="401"/>
        <end position="422"/>
    </location>
</feature>
<feature type="compositionally biased region" description="Basic and acidic residues" evidence="3">
    <location>
        <begin position="561"/>
        <end position="572"/>
    </location>
</feature>
<comment type="function">
    <text evidence="1 4">Component of the cleavage and polyadenylation specificity factor (CPSF) complex that plays a key role in pre-mRNA 3'-end formation, recognizing the AAUAAA signal sequence and interacting with poly(A) polymerase and other factors to bring about cleavage and poly(A) addition. This subunit is involved in the RNA recognition step of the polyadenylation reaction (By similarity). Plays a role in eye morphogenesis and the development of retinal ganglion cell projections to the tectum (PubMed:30689892).</text>
</comment>
<comment type="subcellular location">
    <subcellularLocation>
        <location evidence="1">Nucleus</location>
        <location evidence="1">Nucleoplasm</location>
    </subcellularLocation>
</comment>
<comment type="disruption phenotype">
    <text evidence="4">Morpholino knockdown results in abnormal eye morphogenesis, small eye size, and reduced number of retinal ganglion cell projections to the tectum.</text>
</comment>
<comment type="similarity">
    <text evidence="5">Belongs to the CPSF1 family.</text>
</comment>
<protein>
    <recommendedName>
        <fullName evidence="1">Cleavage and polyadenylation specificity factor subunit 1</fullName>
    </recommendedName>
    <alternativeName>
        <fullName>Cleavage and polyadenylation specific factor 1</fullName>
    </alternativeName>
</protein>
<gene>
    <name type="primary">cpsf1</name>
</gene>